<comment type="similarity">
    <text evidence="1">Belongs to the UPF0102 family.</text>
</comment>
<feature type="chain" id="PRO_1000200146" description="UPF0102 protein YraN">
    <location>
        <begin position="1"/>
        <end position="131"/>
    </location>
</feature>
<feature type="region of interest" description="Disordered" evidence="2">
    <location>
        <begin position="1"/>
        <end position="20"/>
    </location>
</feature>
<feature type="compositionally biased region" description="Polar residues" evidence="2">
    <location>
        <begin position="1"/>
        <end position="19"/>
    </location>
</feature>
<sequence length="131" mass="14770">MATVPTRSGSPRQLTTKQTGDAWEVQARRWLEGKGLRFVAANVNERGGEIDLIMREGQTTVFVEVRYRRSALYGGAAASVTRSKQHKLLQTARLWLARHNGSFDTVDCRFDVVAFTGNEVEWIKDAFNDHS</sequence>
<evidence type="ECO:0000255" key="1">
    <source>
        <dbReference type="HAMAP-Rule" id="MF_00048"/>
    </source>
</evidence>
<evidence type="ECO:0000256" key="2">
    <source>
        <dbReference type="SAM" id="MobiDB-lite"/>
    </source>
</evidence>
<accession>B7LMT7</accession>
<name>YRAN_ESCF3</name>
<reference key="1">
    <citation type="journal article" date="2009" name="PLoS Genet.">
        <title>Organised genome dynamics in the Escherichia coli species results in highly diverse adaptive paths.</title>
        <authorList>
            <person name="Touchon M."/>
            <person name="Hoede C."/>
            <person name="Tenaillon O."/>
            <person name="Barbe V."/>
            <person name="Baeriswyl S."/>
            <person name="Bidet P."/>
            <person name="Bingen E."/>
            <person name="Bonacorsi S."/>
            <person name="Bouchier C."/>
            <person name="Bouvet O."/>
            <person name="Calteau A."/>
            <person name="Chiapello H."/>
            <person name="Clermont O."/>
            <person name="Cruveiller S."/>
            <person name="Danchin A."/>
            <person name="Diard M."/>
            <person name="Dossat C."/>
            <person name="Karoui M.E."/>
            <person name="Frapy E."/>
            <person name="Garry L."/>
            <person name="Ghigo J.M."/>
            <person name="Gilles A.M."/>
            <person name="Johnson J."/>
            <person name="Le Bouguenec C."/>
            <person name="Lescat M."/>
            <person name="Mangenot S."/>
            <person name="Martinez-Jehanne V."/>
            <person name="Matic I."/>
            <person name="Nassif X."/>
            <person name="Oztas S."/>
            <person name="Petit M.A."/>
            <person name="Pichon C."/>
            <person name="Rouy Z."/>
            <person name="Ruf C.S."/>
            <person name="Schneider D."/>
            <person name="Tourret J."/>
            <person name="Vacherie B."/>
            <person name="Vallenet D."/>
            <person name="Medigue C."/>
            <person name="Rocha E.P.C."/>
            <person name="Denamur E."/>
        </authorList>
    </citation>
    <scope>NUCLEOTIDE SEQUENCE [LARGE SCALE GENOMIC DNA]</scope>
    <source>
        <strain>ATCC 35469 / DSM 13698 / BCRC 15582 / CCUG 18766 / IAM 14443 / JCM 21226 / LMG 7866 / NBRC 102419 / NCTC 12128 / CDC 0568-73</strain>
    </source>
</reference>
<protein>
    <recommendedName>
        <fullName evidence="1">UPF0102 protein YraN</fullName>
    </recommendedName>
</protein>
<organism>
    <name type="scientific">Escherichia fergusonii (strain ATCC 35469 / DSM 13698 / CCUG 18766 / IAM 14443 / JCM 21226 / LMG 7866 / NBRC 102419 / NCTC 12128 / CDC 0568-73)</name>
    <dbReference type="NCBI Taxonomy" id="585054"/>
    <lineage>
        <taxon>Bacteria</taxon>
        <taxon>Pseudomonadati</taxon>
        <taxon>Pseudomonadota</taxon>
        <taxon>Gammaproteobacteria</taxon>
        <taxon>Enterobacterales</taxon>
        <taxon>Enterobacteriaceae</taxon>
        <taxon>Escherichia</taxon>
    </lineage>
</organism>
<proteinExistence type="inferred from homology"/>
<dbReference type="EMBL" id="CU928158">
    <property type="protein sequence ID" value="CAQ91765.1"/>
    <property type="molecule type" value="Genomic_DNA"/>
</dbReference>
<dbReference type="RefSeq" id="WP_000246848.1">
    <property type="nucleotide sequence ID" value="NC_011740.1"/>
</dbReference>
<dbReference type="SMR" id="B7LMT7"/>
<dbReference type="KEGG" id="efe:EFER_4347"/>
<dbReference type="HOGENOM" id="CLU_115353_1_0_6"/>
<dbReference type="OrthoDB" id="9794876at2"/>
<dbReference type="Proteomes" id="UP000000745">
    <property type="component" value="Chromosome"/>
</dbReference>
<dbReference type="GO" id="GO:0003676">
    <property type="term" value="F:nucleic acid binding"/>
    <property type="evidence" value="ECO:0007669"/>
    <property type="project" value="InterPro"/>
</dbReference>
<dbReference type="CDD" id="cd20736">
    <property type="entry name" value="PoNe_Nuclease"/>
    <property type="match status" value="1"/>
</dbReference>
<dbReference type="Gene3D" id="3.40.1350.10">
    <property type="match status" value="1"/>
</dbReference>
<dbReference type="HAMAP" id="MF_00048">
    <property type="entry name" value="UPF0102"/>
    <property type="match status" value="1"/>
</dbReference>
<dbReference type="InterPro" id="IPR011335">
    <property type="entry name" value="Restrct_endonuc-II-like"/>
</dbReference>
<dbReference type="InterPro" id="IPR011856">
    <property type="entry name" value="tRNA_endonuc-like_dom_sf"/>
</dbReference>
<dbReference type="InterPro" id="IPR003509">
    <property type="entry name" value="UPF0102_YraN-like"/>
</dbReference>
<dbReference type="NCBIfam" id="NF009150">
    <property type="entry name" value="PRK12497.1-3"/>
    <property type="match status" value="1"/>
</dbReference>
<dbReference type="NCBIfam" id="TIGR00252">
    <property type="entry name" value="YraN family protein"/>
    <property type="match status" value="1"/>
</dbReference>
<dbReference type="PANTHER" id="PTHR34039">
    <property type="entry name" value="UPF0102 PROTEIN YRAN"/>
    <property type="match status" value="1"/>
</dbReference>
<dbReference type="PANTHER" id="PTHR34039:SF1">
    <property type="entry name" value="UPF0102 PROTEIN YRAN"/>
    <property type="match status" value="1"/>
</dbReference>
<dbReference type="Pfam" id="PF02021">
    <property type="entry name" value="UPF0102"/>
    <property type="match status" value="1"/>
</dbReference>
<dbReference type="SUPFAM" id="SSF52980">
    <property type="entry name" value="Restriction endonuclease-like"/>
    <property type="match status" value="1"/>
</dbReference>
<gene>
    <name evidence="1" type="primary">yraN</name>
    <name type="ordered locus">EFER_4347</name>
</gene>